<keyword id="KW-1185">Reference proteome</keyword>
<keyword id="KW-0732">Signal</keyword>
<feature type="signal peptide" evidence="1">
    <location>
        <begin position="1"/>
        <end position="29"/>
    </location>
</feature>
<feature type="chain" id="PRO_0000013709" description="Uncharacterized protein YjiA">
    <location>
        <begin position="30"/>
        <end position="92"/>
    </location>
</feature>
<accession>O34679</accession>
<dbReference type="EMBL" id="AF015825">
    <property type="protein sequence ID" value="AAC46316.1"/>
    <property type="molecule type" value="Genomic_DNA"/>
</dbReference>
<dbReference type="EMBL" id="AL009126">
    <property type="protein sequence ID" value="CAB13077.1"/>
    <property type="molecule type" value="Genomic_DNA"/>
</dbReference>
<dbReference type="PIR" id="A69851">
    <property type="entry name" value="A69851"/>
</dbReference>
<dbReference type="RefSeq" id="NP_389102.1">
    <property type="nucleotide sequence ID" value="NC_000964.3"/>
</dbReference>
<dbReference type="RefSeq" id="WP_003232791.1">
    <property type="nucleotide sequence ID" value="NZ_OZ025638.1"/>
</dbReference>
<dbReference type="SMR" id="O34679"/>
<dbReference type="FunCoup" id="O34679">
    <property type="interactions" value="76"/>
</dbReference>
<dbReference type="PaxDb" id="224308-BSU12200"/>
<dbReference type="EnsemblBacteria" id="CAB13077">
    <property type="protein sequence ID" value="CAB13077"/>
    <property type="gene ID" value="BSU_12200"/>
</dbReference>
<dbReference type="GeneID" id="939399"/>
<dbReference type="KEGG" id="bsu:BSU12200"/>
<dbReference type="PATRIC" id="fig|224308.179.peg.1318"/>
<dbReference type="InParanoid" id="O34679"/>
<dbReference type="OrthoDB" id="2930789at2"/>
<dbReference type="BioCyc" id="BSUB:BSU12200-MONOMER"/>
<dbReference type="Proteomes" id="UP000001570">
    <property type="component" value="Chromosome"/>
</dbReference>
<reference key="1">
    <citation type="submission" date="1997-07" db="EMBL/GenBank/DDBJ databases">
        <title>A 35.7 kb DNA fragment from Bacillus subtilis chromosome containing a putative 12.3 kb operon involved in hexuronate catabolism and a perfect catabolite-responsive element.</title>
        <authorList>
            <person name="Rivolta C."/>
            <person name="Soldo B."/>
            <person name="Lazarevic V."/>
            <person name="Joris B."/>
            <person name="Mauel C."/>
            <person name="Karamata D."/>
        </authorList>
    </citation>
    <scope>NUCLEOTIDE SEQUENCE [GENOMIC DNA]</scope>
    <source>
        <strain>168</strain>
    </source>
</reference>
<reference key="2">
    <citation type="journal article" date="1997" name="Nature">
        <title>The complete genome sequence of the Gram-positive bacterium Bacillus subtilis.</title>
        <authorList>
            <person name="Kunst F."/>
            <person name="Ogasawara N."/>
            <person name="Moszer I."/>
            <person name="Albertini A.M."/>
            <person name="Alloni G."/>
            <person name="Azevedo V."/>
            <person name="Bertero M.G."/>
            <person name="Bessieres P."/>
            <person name="Bolotin A."/>
            <person name="Borchert S."/>
            <person name="Borriss R."/>
            <person name="Boursier L."/>
            <person name="Brans A."/>
            <person name="Braun M."/>
            <person name="Brignell S.C."/>
            <person name="Bron S."/>
            <person name="Brouillet S."/>
            <person name="Bruschi C.V."/>
            <person name="Caldwell B."/>
            <person name="Capuano V."/>
            <person name="Carter N.M."/>
            <person name="Choi S.-K."/>
            <person name="Codani J.-J."/>
            <person name="Connerton I.F."/>
            <person name="Cummings N.J."/>
            <person name="Daniel R.A."/>
            <person name="Denizot F."/>
            <person name="Devine K.M."/>
            <person name="Duesterhoeft A."/>
            <person name="Ehrlich S.D."/>
            <person name="Emmerson P.T."/>
            <person name="Entian K.-D."/>
            <person name="Errington J."/>
            <person name="Fabret C."/>
            <person name="Ferrari E."/>
            <person name="Foulger D."/>
            <person name="Fritz C."/>
            <person name="Fujita M."/>
            <person name="Fujita Y."/>
            <person name="Fuma S."/>
            <person name="Galizzi A."/>
            <person name="Galleron N."/>
            <person name="Ghim S.-Y."/>
            <person name="Glaser P."/>
            <person name="Goffeau A."/>
            <person name="Golightly E.J."/>
            <person name="Grandi G."/>
            <person name="Guiseppi G."/>
            <person name="Guy B.J."/>
            <person name="Haga K."/>
            <person name="Haiech J."/>
            <person name="Harwood C.R."/>
            <person name="Henaut A."/>
            <person name="Hilbert H."/>
            <person name="Holsappel S."/>
            <person name="Hosono S."/>
            <person name="Hullo M.-F."/>
            <person name="Itaya M."/>
            <person name="Jones L.-M."/>
            <person name="Joris B."/>
            <person name="Karamata D."/>
            <person name="Kasahara Y."/>
            <person name="Klaerr-Blanchard M."/>
            <person name="Klein C."/>
            <person name="Kobayashi Y."/>
            <person name="Koetter P."/>
            <person name="Koningstein G."/>
            <person name="Krogh S."/>
            <person name="Kumano M."/>
            <person name="Kurita K."/>
            <person name="Lapidus A."/>
            <person name="Lardinois S."/>
            <person name="Lauber J."/>
            <person name="Lazarevic V."/>
            <person name="Lee S.-M."/>
            <person name="Levine A."/>
            <person name="Liu H."/>
            <person name="Masuda S."/>
            <person name="Mauel C."/>
            <person name="Medigue C."/>
            <person name="Medina N."/>
            <person name="Mellado R.P."/>
            <person name="Mizuno M."/>
            <person name="Moestl D."/>
            <person name="Nakai S."/>
            <person name="Noback M."/>
            <person name="Noone D."/>
            <person name="O'Reilly M."/>
            <person name="Ogawa K."/>
            <person name="Ogiwara A."/>
            <person name="Oudega B."/>
            <person name="Park S.-H."/>
            <person name="Parro V."/>
            <person name="Pohl T.M."/>
            <person name="Portetelle D."/>
            <person name="Porwollik S."/>
            <person name="Prescott A.M."/>
            <person name="Presecan E."/>
            <person name="Pujic P."/>
            <person name="Purnelle B."/>
            <person name="Rapoport G."/>
            <person name="Rey M."/>
            <person name="Reynolds S."/>
            <person name="Rieger M."/>
            <person name="Rivolta C."/>
            <person name="Rocha E."/>
            <person name="Roche B."/>
            <person name="Rose M."/>
            <person name="Sadaie Y."/>
            <person name="Sato T."/>
            <person name="Scanlan E."/>
            <person name="Schleich S."/>
            <person name="Schroeter R."/>
            <person name="Scoffone F."/>
            <person name="Sekiguchi J."/>
            <person name="Sekowska A."/>
            <person name="Seror S.J."/>
            <person name="Serror P."/>
            <person name="Shin B.-S."/>
            <person name="Soldo B."/>
            <person name="Sorokin A."/>
            <person name="Tacconi E."/>
            <person name="Takagi T."/>
            <person name="Takahashi H."/>
            <person name="Takemaru K."/>
            <person name="Takeuchi M."/>
            <person name="Tamakoshi A."/>
            <person name="Tanaka T."/>
            <person name="Terpstra P."/>
            <person name="Tognoni A."/>
            <person name="Tosato V."/>
            <person name="Uchiyama S."/>
            <person name="Vandenbol M."/>
            <person name="Vannier F."/>
            <person name="Vassarotti A."/>
            <person name="Viari A."/>
            <person name="Wambutt R."/>
            <person name="Wedler E."/>
            <person name="Wedler H."/>
            <person name="Weitzenegger T."/>
            <person name="Winters P."/>
            <person name="Wipat A."/>
            <person name="Yamamoto H."/>
            <person name="Yamane K."/>
            <person name="Yasumoto K."/>
            <person name="Yata K."/>
            <person name="Yoshida K."/>
            <person name="Yoshikawa H.-F."/>
            <person name="Zumstein E."/>
            <person name="Yoshikawa H."/>
            <person name="Danchin A."/>
        </authorList>
    </citation>
    <scope>NUCLEOTIDE SEQUENCE [LARGE SCALE GENOMIC DNA]</scope>
    <source>
        <strain>168</strain>
    </source>
</reference>
<name>YJIA_BACSU</name>
<organism>
    <name type="scientific">Bacillus subtilis (strain 168)</name>
    <dbReference type="NCBI Taxonomy" id="224308"/>
    <lineage>
        <taxon>Bacteria</taxon>
        <taxon>Bacillati</taxon>
        <taxon>Bacillota</taxon>
        <taxon>Bacilli</taxon>
        <taxon>Bacillales</taxon>
        <taxon>Bacillaceae</taxon>
        <taxon>Bacillus</taxon>
    </lineage>
</organism>
<evidence type="ECO:0000255" key="1"/>
<gene>
    <name type="primary">yjiA</name>
    <name type="ordered locus">BSU12200</name>
</gene>
<sequence length="92" mass="10504">MAAQTDYKKQVVGILLSLAFVLFVFSFSERHEKPLVEGKKQENWHTVVDKASVKIYGSRLVEENKLKQKLGHKQADSILTLLKLANEKHITL</sequence>
<proteinExistence type="inferred from homology"/>
<protein>
    <recommendedName>
        <fullName>Uncharacterized protein YjiA</fullName>
    </recommendedName>
</protein>